<feature type="chain" id="PRO_0000048834" description="Homeobox protein BarH-like 1">
    <location>
        <begin position="1"/>
        <end position="254"/>
    </location>
</feature>
<feature type="DNA-binding region" description="Homeobox" evidence="2">
    <location>
        <begin position="142"/>
        <end position="201"/>
    </location>
</feature>
<feature type="region of interest" description="Disordered" evidence="3">
    <location>
        <begin position="1"/>
        <end position="20"/>
    </location>
</feature>
<feature type="region of interest" description="Disordered" evidence="3">
    <location>
        <begin position="204"/>
        <end position="254"/>
    </location>
</feature>
<feature type="compositionally biased region" description="Basic and acidic residues" evidence="3">
    <location>
        <begin position="230"/>
        <end position="254"/>
    </location>
</feature>
<feature type="splice variant" id="VSP_034700" description="In isoform 2." evidence="6">
    <location>
        <begin position="1"/>
        <end position="154"/>
    </location>
</feature>
<feature type="sequence variant" id="VAR_010927" description="In dbSNP:rs191789925." evidence="4">
    <original>A</original>
    <variation>T</variation>
    <location>
        <position position="48"/>
    </location>
</feature>
<feature type="sequence conflict" description="In Ref. 1; AAG23738." evidence="7" ref="1">
    <original>G</original>
    <variation>A</variation>
    <location>
        <position position="8"/>
    </location>
</feature>
<feature type="sequence conflict" description="In Ref. 1; AAG23738." evidence="7" ref="1">
    <original>P</original>
    <variation>A</variation>
    <location>
        <position position="14"/>
    </location>
</feature>
<feature type="sequence conflict" description="In Ref. 1; AAG23738." evidence="7" ref="1">
    <original>H</original>
    <variation>Q</variation>
    <location>
        <position position="24"/>
    </location>
</feature>
<feature type="sequence conflict" description="In Ref. 1; AAG23738." evidence="7" ref="1">
    <original>QL</original>
    <variation>HV</variation>
    <location>
        <begin position="122"/>
        <end position="123"/>
    </location>
</feature>
<feature type="helix" evidence="9">
    <location>
        <begin position="151"/>
        <end position="163"/>
    </location>
</feature>
<feature type="helix" evidence="9">
    <location>
        <begin position="169"/>
        <end position="179"/>
    </location>
</feature>
<feature type="helix" evidence="9">
    <location>
        <begin position="183"/>
        <end position="197"/>
    </location>
</feature>
<name>BARX1_HUMAN</name>
<proteinExistence type="evidence at protein level"/>
<sequence length="254" mass="27298">MQRPGEPGAARFGPPEGCADHRPHRYRSFMIEEILTEPPGPKGAAPAAAAAAAGELLKFGVQALLAARPFHSHLAVLKAEQAAVFKFPLAPLGCSGLSSALLAAGPGLPGAAGAPHLPLELQLRGKLEAAGPGEPGTKAKKGRRSRTVFTELQLMGLEKRFEKQKYLSTPDRIDLAESLGLSQLQVKTWYQNRRMKWKKIVLQGGGLESPTKPKGRPKKNSIPTSEQLTEQERAKDAEKPAEVPGEPSDRSRED</sequence>
<protein>
    <recommendedName>
        <fullName>Homeobox protein BarH-like 1</fullName>
    </recommendedName>
</protein>
<accession>Q9HBU1</accession>
<accession>Q6P2R4</accession>
<accession>Q96GH8</accession>
<comment type="function">
    <text evidence="1 5">Transcription factor, which is involved in craniofacial development, in odontogenesis and in stomach organogenesis. May have a role in the differentiation of molars from incisors. Plays a role in suppressing endodermal Wnt activity (By similarity). Binds to a regulatory module of the NCAM promoter.</text>
</comment>
<comment type="subcellular location">
    <subcellularLocation>
        <location evidence="7">Nucleus</location>
    </subcellularLocation>
</comment>
<comment type="alternative products">
    <event type="alternative splicing"/>
    <isoform>
        <id>Q9HBU1-1</id>
        <name>1</name>
        <sequence type="displayed"/>
    </isoform>
    <isoform>
        <id>Q9HBU1-2</id>
        <name>2</name>
        <sequence type="described" ref="VSP_034700"/>
    </isoform>
</comment>
<comment type="tissue specificity">
    <text>Widely expressed. Expressed at higher levels in testis and heart. Detected in craniofacial tissue and adult iris, but not in lymphocytes, fibroblasts, choroid retina, retinal pigment epithelium, kidney, or fetal liver.</text>
</comment>
<comment type="polymorphism">
    <text evidence="8">The polymorphism is not associated with Axenfeld-Reiger syndrome (ARS), iridogoniodysgenesis syndrome (IGDS) or related ocular malformations.</text>
</comment>
<comment type="similarity">
    <text evidence="7">Belongs to the BAR homeobox family.</text>
</comment>
<comment type="sequence caution" evidence="7">
    <conflict type="frameshift">
        <sequence resource="EMBL-CDS" id="AAG23738"/>
    </conflict>
</comment>
<gene>
    <name type="primary">BARX1</name>
</gene>
<keyword id="KW-0002">3D-structure</keyword>
<keyword id="KW-0025">Alternative splicing</keyword>
<keyword id="KW-0238">DNA-binding</keyword>
<keyword id="KW-0371">Homeobox</keyword>
<keyword id="KW-0539">Nucleus</keyword>
<keyword id="KW-1267">Proteomics identification</keyword>
<keyword id="KW-1185">Reference proteome</keyword>
<keyword id="KW-0804">Transcription</keyword>
<keyword id="KW-0805">Transcription regulation</keyword>
<dbReference type="EMBL" id="AF213356">
    <property type="protein sequence ID" value="AAG23738.1"/>
    <property type="status" value="ALT_FRAME"/>
    <property type="molecule type" value="mRNA"/>
</dbReference>
<dbReference type="EMBL" id="AL357073">
    <property type="status" value="NOT_ANNOTATED_CDS"/>
    <property type="molecule type" value="Genomic_DNA"/>
</dbReference>
<dbReference type="EMBL" id="CH471089">
    <property type="protein sequence ID" value="EAW62873.1"/>
    <property type="molecule type" value="Genomic_DNA"/>
</dbReference>
<dbReference type="EMBL" id="BC009458">
    <property type="protein sequence ID" value="AAH09458.1"/>
    <property type="molecule type" value="mRNA"/>
</dbReference>
<dbReference type="EMBL" id="BC064363">
    <property type="protein sequence ID" value="AAH64363.1"/>
    <property type="molecule type" value="mRNA"/>
</dbReference>
<dbReference type="CCDS" id="CCDS35070.2">
    <molecule id="Q9HBU1-1"/>
</dbReference>
<dbReference type="RefSeq" id="NP_067545.3">
    <molecule id="Q9HBU1-1"/>
    <property type="nucleotide sequence ID" value="NM_021570.3"/>
</dbReference>
<dbReference type="PDB" id="2DMT">
    <property type="method" value="NMR"/>
    <property type="chains" value="A=133-199"/>
</dbReference>
<dbReference type="PDBsum" id="2DMT"/>
<dbReference type="BMRB" id="Q9HBU1"/>
<dbReference type="SMR" id="Q9HBU1"/>
<dbReference type="BioGRID" id="121031">
    <property type="interactions" value="9"/>
</dbReference>
<dbReference type="FunCoup" id="Q9HBU1">
    <property type="interactions" value="741"/>
</dbReference>
<dbReference type="IntAct" id="Q9HBU1">
    <property type="interactions" value="6"/>
</dbReference>
<dbReference type="MINT" id="Q9HBU1"/>
<dbReference type="STRING" id="9606.ENSP00000253968"/>
<dbReference type="iPTMnet" id="Q9HBU1"/>
<dbReference type="PhosphoSitePlus" id="Q9HBU1"/>
<dbReference type="BioMuta" id="BARX1"/>
<dbReference type="DMDM" id="205830909"/>
<dbReference type="jPOST" id="Q9HBU1"/>
<dbReference type="MassIVE" id="Q9HBU1"/>
<dbReference type="PaxDb" id="9606-ENSP00000253968"/>
<dbReference type="PeptideAtlas" id="Q9HBU1"/>
<dbReference type="ProteomicsDB" id="81593">
    <molecule id="Q9HBU1-1"/>
</dbReference>
<dbReference type="ProteomicsDB" id="81594">
    <molecule id="Q9HBU1-2"/>
</dbReference>
<dbReference type="Antibodypedia" id="28447">
    <property type="antibodies" value="252 antibodies from 26 providers"/>
</dbReference>
<dbReference type="DNASU" id="56033"/>
<dbReference type="Ensembl" id="ENST00000253968.11">
    <molecule id="Q9HBU1-1"/>
    <property type="protein sequence ID" value="ENSP00000253968.5"/>
    <property type="gene ID" value="ENSG00000131668.14"/>
</dbReference>
<dbReference type="Ensembl" id="ENST00000401724.1">
    <molecule id="Q9HBU1-2"/>
    <property type="protein sequence ID" value="ENSP00000385613.1"/>
    <property type="gene ID" value="ENSG00000131668.14"/>
</dbReference>
<dbReference type="GeneID" id="56033"/>
<dbReference type="KEGG" id="hsa:56033"/>
<dbReference type="MANE-Select" id="ENST00000253968.11">
    <property type="protein sequence ID" value="ENSP00000253968.5"/>
    <property type="RefSeq nucleotide sequence ID" value="NM_021570.4"/>
    <property type="RefSeq protein sequence ID" value="NP_067545.3"/>
</dbReference>
<dbReference type="UCSC" id="uc004aud.3">
    <molecule id="Q9HBU1-1"/>
    <property type="organism name" value="human"/>
</dbReference>
<dbReference type="AGR" id="HGNC:955"/>
<dbReference type="CTD" id="56033"/>
<dbReference type="DisGeNET" id="56033"/>
<dbReference type="GeneCards" id="BARX1"/>
<dbReference type="HGNC" id="HGNC:955">
    <property type="gene designation" value="BARX1"/>
</dbReference>
<dbReference type="HPA" id="ENSG00000131668">
    <property type="expression patterns" value="Tissue enriched (stomach)"/>
</dbReference>
<dbReference type="MIM" id="603260">
    <property type="type" value="gene"/>
</dbReference>
<dbReference type="neXtProt" id="NX_Q9HBU1"/>
<dbReference type="OpenTargets" id="ENSG00000131668"/>
<dbReference type="PharmGKB" id="PA25259"/>
<dbReference type="VEuPathDB" id="HostDB:ENSG00000131668"/>
<dbReference type="eggNOG" id="KOG0488">
    <property type="taxonomic scope" value="Eukaryota"/>
</dbReference>
<dbReference type="GeneTree" id="ENSGT00940000160218"/>
<dbReference type="HOGENOM" id="CLU_090214_1_0_1"/>
<dbReference type="InParanoid" id="Q9HBU1"/>
<dbReference type="OMA" id="CADHRSH"/>
<dbReference type="OrthoDB" id="6159439at2759"/>
<dbReference type="PAN-GO" id="Q9HBU1">
    <property type="GO annotations" value="4 GO annotations based on evolutionary models"/>
</dbReference>
<dbReference type="PhylomeDB" id="Q9HBU1"/>
<dbReference type="TreeFam" id="TF350735"/>
<dbReference type="PathwayCommons" id="Q9HBU1"/>
<dbReference type="SignaLink" id="Q9HBU1"/>
<dbReference type="BioGRID-ORCS" id="56033">
    <property type="hits" value="13 hits in 1169 CRISPR screens"/>
</dbReference>
<dbReference type="EvolutionaryTrace" id="Q9HBU1"/>
<dbReference type="GenomeRNAi" id="56033"/>
<dbReference type="Pharos" id="Q9HBU1">
    <property type="development level" value="Tbio"/>
</dbReference>
<dbReference type="PRO" id="PR:Q9HBU1"/>
<dbReference type="Proteomes" id="UP000005640">
    <property type="component" value="Chromosome 9"/>
</dbReference>
<dbReference type="RNAct" id="Q9HBU1">
    <property type="molecule type" value="protein"/>
</dbReference>
<dbReference type="Bgee" id="ENSG00000131668">
    <property type="expression patterns" value="Expressed in mucosa of stomach and 71 other cell types or tissues"/>
</dbReference>
<dbReference type="GO" id="GO:0000785">
    <property type="term" value="C:chromatin"/>
    <property type="evidence" value="ECO:0000247"/>
    <property type="project" value="NTNU_SB"/>
</dbReference>
<dbReference type="GO" id="GO:0005634">
    <property type="term" value="C:nucleus"/>
    <property type="evidence" value="ECO:0000318"/>
    <property type="project" value="GO_Central"/>
</dbReference>
<dbReference type="GO" id="GO:0003700">
    <property type="term" value="F:DNA-binding transcription factor activity"/>
    <property type="evidence" value="ECO:0000303"/>
    <property type="project" value="UniProtKB"/>
</dbReference>
<dbReference type="GO" id="GO:0000981">
    <property type="term" value="F:DNA-binding transcription factor activity, RNA polymerase II-specific"/>
    <property type="evidence" value="ECO:0000247"/>
    <property type="project" value="NTNU_SB"/>
</dbReference>
<dbReference type="GO" id="GO:0000977">
    <property type="term" value="F:RNA polymerase II transcription regulatory region sequence-specific DNA binding"/>
    <property type="evidence" value="ECO:0000318"/>
    <property type="project" value="GO_Central"/>
</dbReference>
<dbReference type="GO" id="GO:0009952">
    <property type="term" value="P:anterior/posterior pattern specification"/>
    <property type="evidence" value="ECO:0007669"/>
    <property type="project" value="Ensembl"/>
</dbReference>
<dbReference type="GO" id="GO:0007267">
    <property type="term" value="P:cell-cell signaling"/>
    <property type="evidence" value="ECO:0007669"/>
    <property type="project" value="Ensembl"/>
</dbReference>
<dbReference type="GO" id="GO:0055123">
    <property type="term" value="P:digestive system development"/>
    <property type="evidence" value="ECO:0007669"/>
    <property type="project" value="Ensembl"/>
</dbReference>
<dbReference type="GO" id="GO:0045446">
    <property type="term" value="P:endothelial cell differentiation"/>
    <property type="evidence" value="ECO:0007669"/>
    <property type="project" value="Ensembl"/>
</dbReference>
<dbReference type="GO" id="GO:0030178">
    <property type="term" value="P:negative regulation of Wnt signaling pathway"/>
    <property type="evidence" value="ECO:0007669"/>
    <property type="project" value="Ensembl"/>
</dbReference>
<dbReference type="GO" id="GO:0006357">
    <property type="term" value="P:regulation of transcription by RNA polymerase II"/>
    <property type="evidence" value="ECO:0000318"/>
    <property type="project" value="GO_Central"/>
</dbReference>
<dbReference type="GO" id="GO:0048536">
    <property type="term" value="P:spleen development"/>
    <property type="evidence" value="ECO:0007669"/>
    <property type="project" value="Ensembl"/>
</dbReference>
<dbReference type="GO" id="GO:0016055">
    <property type="term" value="P:Wnt signaling pathway"/>
    <property type="evidence" value="ECO:0007669"/>
    <property type="project" value="Ensembl"/>
</dbReference>
<dbReference type="CDD" id="cd00086">
    <property type="entry name" value="homeodomain"/>
    <property type="match status" value="1"/>
</dbReference>
<dbReference type="FunFam" id="1.10.10.60:FF:000103">
    <property type="entry name" value="Homeobox protein BarH-like 2"/>
    <property type="match status" value="1"/>
</dbReference>
<dbReference type="Gene3D" id="1.10.10.60">
    <property type="entry name" value="Homeodomain-like"/>
    <property type="match status" value="1"/>
</dbReference>
<dbReference type="InterPro" id="IPR001356">
    <property type="entry name" value="HD"/>
</dbReference>
<dbReference type="InterPro" id="IPR020479">
    <property type="entry name" value="HD_metazoa"/>
</dbReference>
<dbReference type="InterPro" id="IPR017970">
    <property type="entry name" value="Homeobox_CS"/>
</dbReference>
<dbReference type="InterPro" id="IPR050848">
    <property type="entry name" value="Homeobox_TF"/>
</dbReference>
<dbReference type="InterPro" id="IPR009057">
    <property type="entry name" value="Homeodomain-like_sf"/>
</dbReference>
<dbReference type="InterPro" id="IPR000047">
    <property type="entry name" value="HTH_motif"/>
</dbReference>
<dbReference type="PANTHER" id="PTHR24333:SF12">
    <property type="entry name" value="BARX HOMEOBOX 1"/>
    <property type="match status" value="1"/>
</dbReference>
<dbReference type="PANTHER" id="PTHR24333">
    <property type="entry name" value="HOMEO BOX HB9 LIKE A-RELATED"/>
    <property type="match status" value="1"/>
</dbReference>
<dbReference type="Pfam" id="PF00046">
    <property type="entry name" value="Homeodomain"/>
    <property type="match status" value="1"/>
</dbReference>
<dbReference type="PRINTS" id="PR00024">
    <property type="entry name" value="HOMEOBOX"/>
</dbReference>
<dbReference type="PRINTS" id="PR00031">
    <property type="entry name" value="HTHREPRESSR"/>
</dbReference>
<dbReference type="SMART" id="SM00389">
    <property type="entry name" value="HOX"/>
    <property type="match status" value="1"/>
</dbReference>
<dbReference type="SUPFAM" id="SSF46689">
    <property type="entry name" value="Homeodomain-like"/>
    <property type="match status" value="1"/>
</dbReference>
<dbReference type="PROSITE" id="PS00027">
    <property type="entry name" value="HOMEOBOX_1"/>
    <property type="match status" value="1"/>
</dbReference>
<dbReference type="PROSITE" id="PS50071">
    <property type="entry name" value="HOMEOBOX_2"/>
    <property type="match status" value="1"/>
</dbReference>
<evidence type="ECO:0000250" key="1"/>
<evidence type="ECO:0000255" key="2">
    <source>
        <dbReference type="PROSITE-ProRule" id="PRU00108"/>
    </source>
</evidence>
<evidence type="ECO:0000256" key="3">
    <source>
        <dbReference type="SAM" id="MobiDB-lite"/>
    </source>
</evidence>
<evidence type="ECO:0000269" key="4">
    <source>
    </source>
</evidence>
<evidence type="ECO:0000269" key="5">
    <source>
    </source>
</evidence>
<evidence type="ECO:0000303" key="6">
    <source>
    </source>
</evidence>
<evidence type="ECO:0000305" key="7"/>
<evidence type="ECO:0000305" key="8">
    <source>
    </source>
</evidence>
<evidence type="ECO:0007829" key="9">
    <source>
        <dbReference type="PDB" id="2DMT"/>
    </source>
</evidence>
<organism>
    <name type="scientific">Homo sapiens</name>
    <name type="common">Human</name>
    <dbReference type="NCBI Taxonomy" id="9606"/>
    <lineage>
        <taxon>Eukaryota</taxon>
        <taxon>Metazoa</taxon>
        <taxon>Chordata</taxon>
        <taxon>Craniata</taxon>
        <taxon>Vertebrata</taxon>
        <taxon>Euteleostomi</taxon>
        <taxon>Mammalia</taxon>
        <taxon>Eutheria</taxon>
        <taxon>Euarchontoglires</taxon>
        <taxon>Primates</taxon>
        <taxon>Haplorrhini</taxon>
        <taxon>Catarrhini</taxon>
        <taxon>Hominidae</taxon>
        <taxon>Homo</taxon>
    </lineage>
</organism>
<reference key="1">
    <citation type="journal article" date="2000" name="Genomics">
        <title>Cloning, characterization, localization, and mutational screening of the human BARX1 gene.</title>
        <authorList>
            <person name="Gould D.B."/>
            <person name="Walter M.A."/>
        </authorList>
    </citation>
    <scope>NUCLEOTIDE SEQUENCE [MRNA] (ISOFORM 1)</scope>
    <scope>VARIANT THR-48</scope>
    <source>
        <tissue>Craniofacial</tissue>
    </source>
</reference>
<reference key="2">
    <citation type="journal article" date="2004" name="Nature">
        <title>DNA sequence and analysis of human chromosome 9.</title>
        <authorList>
            <person name="Humphray S.J."/>
            <person name="Oliver K."/>
            <person name="Hunt A.R."/>
            <person name="Plumb R.W."/>
            <person name="Loveland J.E."/>
            <person name="Howe K.L."/>
            <person name="Andrews T.D."/>
            <person name="Searle S."/>
            <person name="Hunt S.E."/>
            <person name="Scott C.E."/>
            <person name="Jones M.C."/>
            <person name="Ainscough R."/>
            <person name="Almeida J.P."/>
            <person name="Ambrose K.D."/>
            <person name="Ashwell R.I.S."/>
            <person name="Babbage A.K."/>
            <person name="Babbage S."/>
            <person name="Bagguley C.L."/>
            <person name="Bailey J."/>
            <person name="Banerjee R."/>
            <person name="Barker D.J."/>
            <person name="Barlow K.F."/>
            <person name="Bates K."/>
            <person name="Beasley H."/>
            <person name="Beasley O."/>
            <person name="Bird C.P."/>
            <person name="Bray-Allen S."/>
            <person name="Brown A.J."/>
            <person name="Brown J.Y."/>
            <person name="Burford D."/>
            <person name="Burrill W."/>
            <person name="Burton J."/>
            <person name="Carder C."/>
            <person name="Carter N.P."/>
            <person name="Chapman J.C."/>
            <person name="Chen Y."/>
            <person name="Clarke G."/>
            <person name="Clark S.Y."/>
            <person name="Clee C.M."/>
            <person name="Clegg S."/>
            <person name="Collier R.E."/>
            <person name="Corby N."/>
            <person name="Crosier M."/>
            <person name="Cummings A.T."/>
            <person name="Davies J."/>
            <person name="Dhami P."/>
            <person name="Dunn M."/>
            <person name="Dutta I."/>
            <person name="Dyer L.W."/>
            <person name="Earthrowl M.E."/>
            <person name="Faulkner L."/>
            <person name="Fleming C.J."/>
            <person name="Frankish A."/>
            <person name="Frankland J.A."/>
            <person name="French L."/>
            <person name="Fricker D.G."/>
            <person name="Garner P."/>
            <person name="Garnett J."/>
            <person name="Ghori J."/>
            <person name="Gilbert J.G.R."/>
            <person name="Glison C."/>
            <person name="Grafham D.V."/>
            <person name="Gribble S."/>
            <person name="Griffiths C."/>
            <person name="Griffiths-Jones S."/>
            <person name="Grocock R."/>
            <person name="Guy J."/>
            <person name="Hall R.E."/>
            <person name="Hammond S."/>
            <person name="Harley J.L."/>
            <person name="Harrison E.S.I."/>
            <person name="Hart E.A."/>
            <person name="Heath P.D."/>
            <person name="Henderson C.D."/>
            <person name="Hopkins B.L."/>
            <person name="Howard P.J."/>
            <person name="Howden P.J."/>
            <person name="Huckle E."/>
            <person name="Johnson C."/>
            <person name="Johnson D."/>
            <person name="Joy A.A."/>
            <person name="Kay M."/>
            <person name="Keenan S."/>
            <person name="Kershaw J.K."/>
            <person name="Kimberley A.M."/>
            <person name="King A."/>
            <person name="Knights A."/>
            <person name="Laird G.K."/>
            <person name="Langford C."/>
            <person name="Lawlor S."/>
            <person name="Leongamornlert D.A."/>
            <person name="Leversha M."/>
            <person name="Lloyd C."/>
            <person name="Lloyd D.M."/>
            <person name="Lovell J."/>
            <person name="Martin S."/>
            <person name="Mashreghi-Mohammadi M."/>
            <person name="Matthews L."/>
            <person name="McLaren S."/>
            <person name="McLay K.E."/>
            <person name="McMurray A."/>
            <person name="Milne S."/>
            <person name="Nickerson T."/>
            <person name="Nisbett J."/>
            <person name="Nordsiek G."/>
            <person name="Pearce A.V."/>
            <person name="Peck A.I."/>
            <person name="Porter K.M."/>
            <person name="Pandian R."/>
            <person name="Pelan S."/>
            <person name="Phillimore B."/>
            <person name="Povey S."/>
            <person name="Ramsey Y."/>
            <person name="Rand V."/>
            <person name="Scharfe M."/>
            <person name="Sehra H.K."/>
            <person name="Shownkeen R."/>
            <person name="Sims S.K."/>
            <person name="Skuce C.D."/>
            <person name="Smith M."/>
            <person name="Steward C.A."/>
            <person name="Swarbreck D."/>
            <person name="Sycamore N."/>
            <person name="Tester J."/>
            <person name="Thorpe A."/>
            <person name="Tracey A."/>
            <person name="Tromans A."/>
            <person name="Thomas D.W."/>
            <person name="Wall M."/>
            <person name="Wallis J.M."/>
            <person name="West A.P."/>
            <person name="Whitehead S.L."/>
            <person name="Willey D.L."/>
            <person name="Williams S.A."/>
            <person name="Wilming L."/>
            <person name="Wray P.W."/>
            <person name="Young L."/>
            <person name="Ashurst J.L."/>
            <person name="Coulson A."/>
            <person name="Blocker H."/>
            <person name="Durbin R.M."/>
            <person name="Sulston J.E."/>
            <person name="Hubbard T."/>
            <person name="Jackson M.J."/>
            <person name="Bentley D.R."/>
            <person name="Beck S."/>
            <person name="Rogers J."/>
            <person name="Dunham I."/>
        </authorList>
    </citation>
    <scope>NUCLEOTIDE SEQUENCE [LARGE SCALE GENOMIC DNA]</scope>
</reference>
<reference key="3">
    <citation type="submission" date="2005-07" db="EMBL/GenBank/DDBJ databases">
        <authorList>
            <person name="Mural R.J."/>
            <person name="Istrail S."/>
            <person name="Sutton G.G."/>
            <person name="Florea L."/>
            <person name="Halpern A.L."/>
            <person name="Mobarry C.M."/>
            <person name="Lippert R."/>
            <person name="Walenz B."/>
            <person name="Shatkay H."/>
            <person name="Dew I."/>
            <person name="Miller J.R."/>
            <person name="Flanigan M.J."/>
            <person name="Edwards N.J."/>
            <person name="Bolanos R."/>
            <person name="Fasulo D."/>
            <person name="Halldorsson B.V."/>
            <person name="Hannenhalli S."/>
            <person name="Turner R."/>
            <person name="Yooseph S."/>
            <person name="Lu F."/>
            <person name="Nusskern D.R."/>
            <person name="Shue B.C."/>
            <person name="Zheng X.H."/>
            <person name="Zhong F."/>
            <person name="Delcher A.L."/>
            <person name="Huson D.H."/>
            <person name="Kravitz S.A."/>
            <person name="Mouchard L."/>
            <person name="Reinert K."/>
            <person name="Remington K.A."/>
            <person name="Clark A.G."/>
            <person name="Waterman M.S."/>
            <person name="Eichler E.E."/>
            <person name="Adams M.D."/>
            <person name="Hunkapiller M.W."/>
            <person name="Myers E.W."/>
            <person name="Venter J.C."/>
        </authorList>
    </citation>
    <scope>NUCLEOTIDE SEQUENCE [LARGE SCALE GENOMIC DNA]</scope>
</reference>
<reference key="4">
    <citation type="journal article" date="2004" name="Genome Res.">
        <title>The status, quality, and expansion of the NIH full-length cDNA project: the Mammalian Gene Collection (MGC).</title>
        <authorList>
            <consortium name="The MGC Project Team"/>
        </authorList>
    </citation>
    <scope>NUCLEOTIDE SEQUENCE [LARGE SCALE MRNA] (ISOFORMS 1 AND 2)</scope>
    <source>
        <tissue>Lung</tissue>
        <tissue>Uterus</tissue>
    </source>
</reference>
<reference key="5">
    <citation type="journal article" date="1998" name="Science">
        <title>Transformation of tooth type induced by inhibition of BMP signaling.</title>
        <authorList>
            <person name="Tucker A.S."/>
            <person name="Matthews K.L."/>
            <person name="Sharpe P.T."/>
        </authorList>
    </citation>
    <scope>FUNCTION</scope>
</reference>
<reference key="6">
    <citation type="submission" date="2006-10" db="PDB data bank">
        <title>Solution structure of the homeobox domain of homeobox protein BarH-like 1.</title>
        <authorList>
            <consortium name="RIKEN structural genomics initiative (RSGI)"/>
        </authorList>
    </citation>
    <scope>STRUCTURE BY NMR OF 132-199</scope>
</reference>